<organism>
    <name type="scientific">Candida albicans (strain SC5314 / ATCC MYA-2876)</name>
    <name type="common">Yeast</name>
    <dbReference type="NCBI Taxonomy" id="237561"/>
    <lineage>
        <taxon>Eukaryota</taxon>
        <taxon>Fungi</taxon>
        <taxon>Dikarya</taxon>
        <taxon>Ascomycota</taxon>
        <taxon>Saccharomycotina</taxon>
        <taxon>Pichiomycetes</taxon>
        <taxon>Debaryomycetaceae</taxon>
        <taxon>Candida/Lodderomyces clade</taxon>
        <taxon>Candida</taxon>
    </lineage>
</organism>
<name>HWP1_CANAL</name>
<feature type="signal peptide" evidence="1">
    <location>
        <begin position="1"/>
        <end position="27"/>
    </location>
</feature>
<feature type="chain" id="PRO_0000084097" description="Hyphal wall protein 1">
    <location>
        <begin position="28"/>
        <end position="613"/>
    </location>
</feature>
<feature type="propeptide" id="PRO_0000425596" description="Removed in mature form">
    <location>
        <begin position="614"/>
        <end position="634"/>
    </location>
</feature>
<feature type="repeat" description="1; approximate">
    <location>
        <begin position="46"/>
        <end position="58"/>
    </location>
</feature>
<feature type="repeat" description="2; approximate">
    <location>
        <begin position="59"/>
        <end position="69"/>
    </location>
</feature>
<feature type="repeat" description="3; approximate">
    <location>
        <begin position="70"/>
        <end position="81"/>
    </location>
</feature>
<feature type="repeat" description="4">
    <location>
        <begin position="82"/>
        <end position="91"/>
    </location>
</feature>
<feature type="repeat" description="5">
    <location>
        <begin position="92"/>
        <end position="101"/>
    </location>
</feature>
<feature type="repeat" description="6">
    <location>
        <begin position="102"/>
        <end position="111"/>
    </location>
</feature>
<feature type="repeat" description="7">
    <location>
        <begin position="112"/>
        <end position="121"/>
    </location>
</feature>
<feature type="repeat" description="8">
    <location>
        <begin position="122"/>
        <end position="131"/>
    </location>
</feature>
<feature type="repeat" description="9">
    <location>
        <begin position="132"/>
        <end position="141"/>
    </location>
</feature>
<feature type="repeat" description="10">
    <location>
        <begin position="142"/>
        <end position="151"/>
    </location>
</feature>
<feature type="repeat" description="11">
    <location>
        <begin position="152"/>
        <end position="161"/>
    </location>
</feature>
<feature type="repeat" description="12">
    <location>
        <begin position="162"/>
        <end position="171"/>
    </location>
</feature>
<feature type="repeat" description="13; truncated">
    <location>
        <begin position="172"/>
        <end position="179"/>
    </location>
</feature>
<feature type="repeat" description="14; truncated">
    <location>
        <begin position="180"/>
        <end position="187"/>
    </location>
</feature>
<feature type="region of interest" description="Disordered" evidence="2">
    <location>
        <begin position="40"/>
        <end position="307"/>
    </location>
</feature>
<feature type="region of interest" description="14 X 10 AA tandem repeats of [EVIQ]-P-[CDT]-D-[YNW]-P-[PQ]-[QI]-[QP]-[QDN]">
    <location>
        <begin position="46"/>
        <end position="187"/>
    </location>
</feature>
<feature type="region of interest" description="Disordered" evidence="2">
    <location>
        <begin position="412"/>
        <end position="570"/>
    </location>
</feature>
<feature type="compositionally biased region" description="Low complexity" evidence="2">
    <location>
        <begin position="42"/>
        <end position="114"/>
    </location>
</feature>
<feature type="compositionally biased region" description="Pro residues" evidence="2">
    <location>
        <begin position="115"/>
        <end position="171"/>
    </location>
</feature>
<feature type="compositionally biased region" description="Low complexity" evidence="2">
    <location>
        <begin position="172"/>
        <end position="183"/>
    </location>
</feature>
<feature type="compositionally biased region" description="Low complexity" evidence="2">
    <location>
        <begin position="193"/>
        <end position="307"/>
    </location>
</feature>
<feature type="compositionally biased region" description="Polar residues" evidence="2">
    <location>
        <begin position="415"/>
        <end position="426"/>
    </location>
</feature>
<feature type="compositionally biased region" description="Low complexity" evidence="2">
    <location>
        <begin position="508"/>
        <end position="550"/>
    </location>
</feature>
<feature type="lipid moiety-binding region" description="GPI-anchor amidated glycine" evidence="14">
    <location>
        <position position="613"/>
    </location>
</feature>
<feature type="glycosylation site" description="N-linked (GlcNAc...) asparagine" evidence="1">
    <location>
        <position position="241"/>
    </location>
</feature>
<feature type="glycosylation site" description="N-linked (GlcNAc...) asparagine" evidence="1">
    <location>
        <position position="286"/>
    </location>
</feature>
<feature type="glycosylation site" description="N-linked (GlcNAc...) asparagine" evidence="1">
    <location>
        <position position="601"/>
    </location>
</feature>
<feature type="mutagenesis site" description="Still allows localization to the cell surface." evidence="14">
    <original>G</original>
    <variation>D</variation>
    <variation>N</variation>
    <variation>S</variation>
    <location>
        <position position="613"/>
    </location>
</feature>
<feature type="mutagenesis site" description="Impairs cell surface localization and localizes exclusively to internal ER-like structures." evidence="14">
    <original>G</original>
    <variation>E</variation>
    <variation>Q</variation>
    <variation>R</variation>
    <variation>T</variation>
    <location>
        <position position="613"/>
    </location>
</feature>
<feature type="sequence conflict" description="In Ref. 1; AAC96368 and 2; AAB64014." evidence="53" ref="1 2">
    <original>V</original>
    <variation>I</variation>
    <location>
        <position position="142"/>
    </location>
</feature>
<feature type="sequence conflict" description="In Ref. 6; AAC49209." evidence="53" ref="6">
    <original>V</original>
    <variation>VPCDNPPQPDI</variation>
    <location>
        <position position="142"/>
    </location>
</feature>
<feature type="sequence conflict" description="In Ref. 1; AAC96368, 2; AAB64014 and 6; AAC49209." evidence="53" ref="1 2 6">
    <original>V</original>
    <variation>I</variation>
    <location>
        <position position="152"/>
    </location>
</feature>
<feature type="sequence conflict" description="In Ref. 1; AAC96368." evidence="53" ref="1">
    <original>A</original>
    <variation>T</variation>
    <location>
        <position position="296"/>
    </location>
</feature>
<feature type="sequence conflict" description="In Ref. 1; AAC96368." evidence="53" ref="1">
    <original>P</original>
    <variation>S</variation>
    <location>
        <position position="441"/>
    </location>
</feature>
<feature type="sequence conflict" description="In Ref. 1; AAC96368." evidence="53" ref="1">
    <original>S</original>
    <variation>P</variation>
    <location>
        <position position="492"/>
    </location>
</feature>
<protein>
    <recommendedName>
        <fullName>Hyphal wall protein 1</fullName>
    </recommendedName>
    <alternativeName>
        <fullName>Cell elongation protein 2</fullName>
    </alternativeName>
</protein>
<gene>
    <name type="primary">HWP1</name>
    <name type="synonym">ECE2</name>
    <name type="ordered locus">CAALFM_C403570WA</name>
    <name type="ORF">CaO19.1321</name>
    <name type="ORF">CaO19.8901</name>
</gene>
<sequence>MRLSTAQLIAIAYYMLSIGATVPQVDGQGETEEALIQKRSYDYYQEPCDDYPQQQQQQEPCDYPQQQQQEEPCDYPQQQPQEPCDYPQQPQEPCDYPQQPQEPCDYPQQPQEPCDNPPQPDVPCDNPPQPDVPCDNPPQPDVPCDNPPQPDVPCDNPPQPDQPDDNPPIPNIPTDWIPNIPTDWIPDIPEKPTTPATTPNIPATTTTSESSSSSSSSSSSTTPKTSASTTPESSVPATTPNTSVPTTSSESTTPATSPESSVPVTSGSSILATTSESSSAPATTPNTSVPTTTTEAKSSSTPLTTTTEHDTTVVTVTSCSNSVCTESEVTTGVIVITSKDTIYTTYCPLTETTPVSTAPATETPTGTVSTSTEQSTTVITVTSCSESSCTESEVTTGVVVVTSEETVYTTFCPLTENTPGTDSTPEASIPPMETIPAGSEPSMPAGETSPAVPKSDVPATESAPVPEMTPAGSQPSIPAGETSPAVPKSDVSATESAPAPEMTPAGTETKPAAPKSSAPATEPSPVAPGTESAPAGPGASSSPKSSVLASETSPIAPGAETAPAGSSGAITIPESSAVVSTTEGAIPTTLESVPLMQPSANYSSVAPISTFEGAGNNMRLTFGAAIIGIAAFLI</sequence>
<dbReference type="EMBL" id="U64206">
    <property type="protein sequence ID" value="AAC96368.1"/>
    <property type="molecule type" value="Genomic_DNA"/>
</dbReference>
<dbReference type="EMBL" id="AF001978">
    <property type="protein sequence ID" value="AAB64014.1"/>
    <property type="molecule type" value="Genomic_DNA"/>
</dbReference>
<dbReference type="EMBL" id="CP017626">
    <property type="protein sequence ID" value="AOW29115.1"/>
    <property type="molecule type" value="Genomic_DNA"/>
</dbReference>
<dbReference type="EMBL" id="U29369">
    <property type="protein sequence ID" value="AAC49209.1"/>
    <property type="molecule type" value="mRNA"/>
</dbReference>
<dbReference type="RefSeq" id="XP_709961.2">
    <property type="nucleotide sequence ID" value="XM_704869.2"/>
</dbReference>
<dbReference type="BioGRID" id="1228465">
    <property type="interactions" value="9"/>
</dbReference>
<dbReference type="STRING" id="237561.P46593"/>
<dbReference type="GlyCosmos" id="P46593">
    <property type="glycosylation" value="3 sites, No reported glycans"/>
</dbReference>
<dbReference type="EnsemblFungi" id="C4_03570W_A-T">
    <property type="protein sequence ID" value="C4_03570W_A-T-p1"/>
    <property type="gene ID" value="C4_03570W_A"/>
</dbReference>
<dbReference type="GeneID" id="3645372"/>
<dbReference type="KEGG" id="cal:CAALFM_C403570WA"/>
<dbReference type="CGD" id="CAL0000200504">
    <property type="gene designation" value="HWP1"/>
</dbReference>
<dbReference type="VEuPathDB" id="FungiDB:C4_03570W_A"/>
<dbReference type="HOGENOM" id="CLU_033728_0_0_1"/>
<dbReference type="InParanoid" id="P46593"/>
<dbReference type="OrthoDB" id="10603075at2759"/>
<dbReference type="PHI-base" id="PHI:175"/>
<dbReference type="PRO" id="PR:P46593"/>
<dbReference type="Proteomes" id="UP000000559">
    <property type="component" value="Chromosome 4"/>
</dbReference>
<dbReference type="GO" id="GO:0009986">
    <property type="term" value="C:cell surface"/>
    <property type="evidence" value="ECO:0000314"/>
    <property type="project" value="CGD"/>
</dbReference>
<dbReference type="GO" id="GO:0005576">
    <property type="term" value="C:extracellular region"/>
    <property type="evidence" value="ECO:0007669"/>
    <property type="project" value="UniProtKB-KW"/>
</dbReference>
<dbReference type="GO" id="GO:0009277">
    <property type="term" value="C:fungal-type cell wall"/>
    <property type="evidence" value="ECO:0000314"/>
    <property type="project" value="CGD"/>
</dbReference>
<dbReference type="GO" id="GO:0030446">
    <property type="term" value="C:hyphal cell wall"/>
    <property type="evidence" value="ECO:0000314"/>
    <property type="project" value="CGD"/>
</dbReference>
<dbReference type="GO" id="GO:0005937">
    <property type="term" value="C:mating projection"/>
    <property type="evidence" value="ECO:0000314"/>
    <property type="project" value="CGD"/>
</dbReference>
<dbReference type="GO" id="GO:0098552">
    <property type="term" value="C:side of membrane"/>
    <property type="evidence" value="ECO:0007669"/>
    <property type="project" value="UniProtKB-KW"/>
</dbReference>
<dbReference type="GO" id="GO:0050839">
    <property type="term" value="F:cell adhesion molecule binding"/>
    <property type="evidence" value="ECO:0000315"/>
    <property type="project" value="CGD"/>
</dbReference>
<dbReference type="GO" id="GO:0044406">
    <property type="term" value="P:adhesion of symbiont to host"/>
    <property type="evidence" value="ECO:0000315"/>
    <property type="project" value="CGD"/>
</dbReference>
<dbReference type="GO" id="GO:0044652">
    <property type="term" value="P:adhesion of symbiont to host endothelial cell"/>
    <property type="evidence" value="ECO:0000315"/>
    <property type="project" value="UniProtKB"/>
</dbReference>
<dbReference type="GO" id="GO:0051701">
    <property type="term" value="P:biological process involved in interaction with host"/>
    <property type="evidence" value="ECO:0000315"/>
    <property type="project" value="CGD"/>
</dbReference>
<dbReference type="GO" id="GO:0007155">
    <property type="term" value="P:cell adhesion"/>
    <property type="evidence" value="ECO:0000315"/>
    <property type="project" value="CGD"/>
</dbReference>
<dbReference type="GO" id="GO:0043708">
    <property type="term" value="P:cell adhesion involved in biofilm formation"/>
    <property type="evidence" value="ECO:0000315"/>
    <property type="project" value="CGD"/>
</dbReference>
<dbReference type="GO" id="GO:0043707">
    <property type="term" value="P:cell adhesion involved in single-species biofilm formation in or on host organism"/>
    <property type="evidence" value="ECO:0000315"/>
    <property type="project" value="CGD"/>
</dbReference>
<dbReference type="GO" id="GO:0098609">
    <property type="term" value="P:cell-cell adhesion"/>
    <property type="evidence" value="ECO:0000315"/>
    <property type="project" value="CGD"/>
</dbReference>
<dbReference type="GO" id="GO:0031505">
    <property type="term" value="P:fungal-type cell wall organization"/>
    <property type="evidence" value="ECO:0000315"/>
    <property type="project" value="CGD"/>
</dbReference>
<dbReference type="GO" id="GO:0044399">
    <property type="term" value="P:multi-species biofilm formation"/>
    <property type="evidence" value="ECO:0000315"/>
    <property type="project" value="CGD"/>
</dbReference>
<dbReference type="GO" id="GO:0044011">
    <property type="term" value="P:single-species biofilm formation on inanimate substrate"/>
    <property type="evidence" value="ECO:0000316"/>
    <property type="project" value="CGD"/>
</dbReference>
<dbReference type="InterPro" id="IPR025928">
    <property type="entry name" value="Flocculin_t3_rpt"/>
</dbReference>
<dbReference type="Pfam" id="PF13928">
    <property type="entry name" value="Flocculin_t3"/>
    <property type="match status" value="2"/>
</dbReference>
<reference key="1">
    <citation type="journal article" date="1998" name="Yeast">
        <title>Genetic organization and sequence analysis of the hypha-specific cell wall protein gene HWP1 of Candida albicans.</title>
        <authorList>
            <person name="Staab J.F."/>
            <person name="Sundstrom P."/>
        </authorList>
    </citation>
    <scope>NUCLEOTIDE SEQUENCE [GENOMIC DNA]</scope>
    <source>
        <strain>SC5314 / ATCC MYA-2876</strain>
    </source>
</reference>
<reference key="2">
    <citation type="journal article" date="1999" name="J. Bacteriol.">
        <title>HWP1 functions in the morphological development of Candida albicans downstream of EFG1, TUP1, and RBF1.</title>
        <authorList>
            <person name="Sharkey L.L."/>
            <person name="McNemar M.D."/>
            <person name="Saporito-Irwin S.M."/>
            <person name="Sypherd P.S."/>
            <person name="Fonzi W.A."/>
        </authorList>
    </citation>
    <scope>NUCLEOTIDE SEQUENCE [GENOMIC DNA]</scope>
    <scope>FUNCTION</scope>
    <scope>INDUCTION</scope>
    <source>
        <strain>SC5314 / ATCC MYA-2876</strain>
    </source>
</reference>
<reference key="3">
    <citation type="journal article" date="2004" name="Proc. Natl. Acad. Sci. U.S.A.">
        <title>The diploid genome sequence of Candida albicans.</title>
        <authorList>
            <person name="Jones T."/>
            <person name="Federspiel N.A."/>
            <person name="Chibana H."/>
            <person name="Dungan J."/>
            <person name="Kalman S."/>
            <person name="Magee B.B."/>
            <person name="Newport G."/>
            <person name="Thorstenson Y.R."/>
            <person name="Agabian N."/>
            <person name="Magee P.T."/>
            <person name="Davis R.W."/>
            <person name="Scherer S."/>
        </authorList>
    </citation>
    <scope>NUCLEOTIDE SEQUENCE [LARGE SCALE GENOMIC DNA]</scope>
    <source>
        <strain>SC5314 / ATCC MYA-2876</strain>
    </source>
</reference>
<reference key="4">
    <citation type="journal article" date="2007" name="Genome Biol.">
        <title>Assembly of the Candida albicans genome into sixteen supercontigs aligned on the eight chromosomes.</title>
        <authorList>
            <person name="van het Hoog M."/>
            <person name="Rast T.J."/>
            <person name="Martchenko M."/>
            <person name="Grindle S."/>
            <person name="Dignard D."/>
            <person name="Hogues H."/>
            <person name="Cuomo C."/>
            <person name="Berriman M."/>
            <person name="Scherer S."/>
            <person name="Magee B.B."/>
            <person name="Whiteway M."/>
            <person name="Chibana H."/>
            <person name="Nantel A."/>
            <person name="Magee P.T."/>
        </authorList>
    </citation>
    <scope>GENOME REANNOTATION</scope>
    <source>
        <strain>SC5314 / ATCC MYA-2876</strain>
    </source>
</reference>
<reference key="5">
    <citation type="journal article" date="2013" name="Genome Biol.">
        <title>Assembly of a phased diploid Candida albicans genome facilitates allele-specific measurements and provides a simple model for repeat and indel structure.</title>
        <authorList>
            <person name="Muzzey D."/>
            <person name="Schwartz K."/>
            <person name="Weissman J.S."/>
            <person name="Sherlock G."/>
        </authorList>
    </citation>
    <scope>NUCLEOTIDE SEQUENCE [LARGE SCALE GENOMIC DNA]</scope>
    <scope>GENOME REANNOTATION</scope>
    <source>
        <strain>SC5314 / ATCC MYA-2876</strain>
    </source>
</reference>
<reference key="6">
    <citation type="journal article" date="1996" name="J. Biol. Chem.">
        <title>Developmental expression of a tandemly repeated, proline- and glutamine-rich amino acid motif on hyphal surfaces on Candida albicans.</title>
        <authorList>
            <person name="Staab J.F."/>
            <person name="Ferrer C.A."/>
            <person name="Sundstrom P."/>
        </authorList>
    </citation>
    <scope>NUCLEOTIDE SEQUENCE [MRNA] OF 1-225</scope>
    <scope>INDUCTION</scope>
    <scope>SUBCELLULAR LOCATION</scope>
    <source>
        <strain>SC5314 / ATCC MYA-2876</strain>
    </source>
</reference>
<reference key="7">
    <citation type="journal article" date="1999" name="Science">
        <title>Adhesive and mammalian transglutaminase substrate properties of Candida albicans Hwp1.</title>
        <authorList>
            <person name="Staab J.F."/>
            <person name="Bradway S.D."/>
            <person name="Fidel P.L."/>
            <person name="Sundstrom P."/>
        </authorList>
    </citation>
    <scope>FUNCTION</scope>
    <scope>DISRUPTION PHENOTYPE</scope>
</reference>
<reference key="8">
    <citation type="journal article" date="2000" name="Genetics">
        <title>TUP1, CPH1 and EFG1 make independent contributions to filamentation in Candida albicans.</title>
        <authorList>
            <person name="Braun B.R."/>
            <person name="Johnson A.D."/>
        </authorList>
    </citation>
    <scope>INDUCTION</scope>
</reference>
<reference key="9">
    <citation type="journal article" date="2000" name="Genetics">
        <title>Identification and characterization of TUP1-regulated genes in Candida albicans.</title>
        <authorList>
            <person name="Braun B.R."/>
            <person name="Head W.S."/>
            <person name="Wang M.X."/>
            <person name="Johnson A.D."/>
        </authorList>
    </citation>
    <scope>INDUCTION</scope>
</reference>
<reference key="10">
    <citation type="journal article" date="2000" name="Infect. Immun.">
        <title>Reduced virulence of HWP1-deficient mutants of Candida albicans and their interactions with host cells.</title>
        <authorList>
            <person name="Tsuchimori N."/>
            <person name="Sharkey L.L."/>
            <person name="Fonzi W.A."/>
            <person name="French S.W."/>
            <person name="Edwards J.E. Jr."/>
            <person name="Filler S.G."/>
        </authorList>
    </citation>
    <scope>FUNCTION</scope>
    <scope>DISRUPTION PHENOTYPE</scope>
</reference>
<reference key="11">
    <citation type="journal article" date="2001" name="J. Bacteriol.">
        <title>Efg1, a morphogenetic regulator in Candida albicans, is a sequence-specific DNA binding protein.</title>
        <authorList>
            <person name="Leng P."/>
            <person name="Lee P.R."/>
            <person name="Wu H."/>
            <person name="Brown A.J."/>
        </authorList>
    </citation>
    <scope>INDUCTION</scope>
</reference>
<reference key="12">
    <citation type="journal article" date="2001" name="Mol. Cell. Biol.">
        <title>Rfg1, a protein related to the Saccharomyces cerevisiae hypoxic regulator Rox1, controls filamentous growth and virulence in Candida albicans.</title>
        <authorList>
            <person name="Kadosh D."/>
            <person name="Johnson A.D."/>
        </authorList>
    </citation>
    <scope>INDUCTION</scope>
</reference>
<reference key="13">
    <citation type="journal article" date="2001" name="Mol. Microbiol.">
        <title>Transcript profiling in Candida albicans reveals new cellular functions for the transcriptional repressors CaTup1, CaMig1 and CaNrg1.</title>
        <authorList>
            <person name="Murad A.M."/>
            <person name="d'Enfert C."/>
            <person name="Gaillardin C."/>
            <person name="Tournu H."/>
            <person name="Tekaia F."/>
            <person name="Talibi D."/>
            <person name="Marechal D."/>
            <person name="Marchais V."/>
            <person name="Cottin J."/>
            <person name="Brown A.J."/>
        </authorList>
    </citation>
    <scope>INDUCTION</scope>
</reference>
<reference key="14">
    <citation type="journal article" date="2002" name="Appl. Environ. Microbiol.">
        <title>Inhibition of Candida albicans biofilm formation by farnesol, a quorum-sensing molecule.</title>
        <authorList>
            <person name="Ramage G."/>
            <person name="Saville S.P."/>
            <person name="Wickes B.L."/>
            <person name="Lopez-Ribot J.L."/>
        </authorList>
    </citation>
    <scope>INDUCTION</scope>
</reference>
<reference key="15">
    <citation type="journal article" date="2002" name="Infect. Immun.">
        <title>Reevaluation of the role of HWP1 in systemic candidiasis by use of Candida albicans strains with selectable marker URA3 targeted to the ENO1 locus.</title>
        <authorList>
            <person name="Sundstrom P."/>
            <person name="Cutler J.E."/>
            <person name="Staab J.F."/>
        </authorList>
    </citation>
    <scope>FUNCTION</scope>
</reference>
<reference key="16">
    <citation type="journal article" date="2003" name="J. Biol. Chem.">
        <title>Inactivation of Kex2p diminishes the virulence of Candida albicans.</title>
        <authorList>
            <person name="Newport G."/>
            <person name="Kuo A."/>
            <person name="Flattery A."/>
            <person name="Gill C."/>
            <person name="Blake J.J."/>
            <person name="Kurtz M.B."/>
            <person name="Abruzzo G.K."/>
            <person name="Agabian N."/>
        </authorList>
    </citation>
    <scope>PREDICTION AS A SUBSTRATE FOR KEX2 CLEAVAGE</scope>
</reference>
<reference key="17">
    <citation type="journal article" date="2002" name="J. Infect. Dis.">
        <title>Essential role of the Candida albicans transglutaminase substrate, hyphal wall protein 1, in lethal oroesophageal candidiasis in immunodeficient mice.</title>
        <authorList>
            <person name="Sundstrom P."/>
            <person name="Balish E."/>
            <person name="Allen C.M."/>
        </authorList>
    </citation>
    <scope>FUNCTION</scope>
    <scope>DISRUPTION PHENOTYPE</scope>
</reference>
<reference key="18">
    <citation type="journal article" date="2003" name="Mol. Biol. Cell">
        <title>The adhesin Hwp1 and the first daughter cell localize to the a/a portion of the conjugation bridge during Candida albicans mating.</title>
        <authorList>
            <person name="Daniels K.J."/>
            <person name="Lockhart S.R."/>
            <person name="Staab J.F."/>
            <person name="Sundstrom P."/>
            <person name="Soll D.R."/>
        </authorList>
    </citation>
    <scope>SUBCELLULAR LOCATION</scope>
</reference>
<reference key="19">
    <citation type="journal article" date="2003" name="Mol. Microbiol.">
        <title>Use of green fluorescent protein fusions to analyse the N- and C-terminal signal peptides of GPI-anchored cell wall proteins in Candida albicans.</title>
        <authorList>
            <person name="Mao Y."/>
            <person name="Zhang Z."/>
            <person name="Wong B."/>
        </authorList>
    </citation>
    <scope>GPI-ANCHOR AT GLY-613</scope>
    <scope>SUBCELLULAR LOCATION</scope>
    <scope>MUTAGENESIS OF GLY-613</scope>
</reference>
<reference key="20">
    <citation type="journal article" date="2003" name="Yeast">
        <title>Genome-wide identification of fungal GPI proteins.</title>
        <authorList>
            <person name="De Groot P.W."/>
            <person name="Hellingwerf K.J."/>
            <person name="Klis F.M."/>
        </authorList>
    </citation>
    <scope>PREDICTION OF GPI-ANCHOR</scope>
</reference>
<reference key="21">
    <citation type="journal article" date="2004" name="Eukaryot. Cell">
        <title>Gpr1, a putative G-protein-coupled receptor, regulates morphogenesis and hypha formation in the pathogenic fungus Candida albicans.</title>
        <authorList>
            <person name="Miwa T."/>
            <person name="Takagi Y."/>
            <person name="Shinozaki M."/>
            <person name="Yun C.W."/>
            <person name="Schell W.A."/>
            <person name="Perfect J.R."/>
            <person name="Kumagai H."/>
            <person name="Tamaki H."/>
        </authorList>
    </citation>
    <scope>INDUCTION</scope>
</reference>
<reference key="22">
    <citation type="journal article" date="2004" name="J. Biol. Chem.">
        <title>Expression of transglutaminase substrate activity on Candida albicans germ tubes through a coiled, disulfide-bonded N-terminal domain of Hwp1 requires C-terminal glycosylphosphatidylinositol modification.</title>
        <authorList>
            <person name="Staab J.F."/>
            <person name="Bahn Y.S."/>
            <person name="Tai C.H."/>
            <person name="Cook P.F."/>
            <person name="Sundstrom P."/>
        </authorList>
    </citation>
    <scope>FUNCTION</scope>
    <scope>GLYCOSYLATION</scope>
    <scope>GPI-ANCHOR</scope>
    <scope>CELL WALL ANCHORAGE</scope>
</reference>
<reference key="23">
    <citation type="journal article" date="2005" name="Curr. Biol.">
        <title>Regulation of cell-surface genes and biofilm formation by the C. albicans transcription factor Bcr1p.</title>
        <authorList>
            <person name="Nobile C.J."/>
            <person name="Mitchell A.P."/>
        </authorList>
    </citation>
    <scope>INDUCTION</scope>
</reference>
<reference key="24">
    <citation type="journal article" date="2006" name="Eukaryot. Cell">
        <title>Function of Candida albicans adhesin Hwp1 in biofilm formation.</title>
        <authorList>
            <person name="Nobile C.J."/>
            <person name="Nett J.E."/>
            <person name="Andes D.R."/>
            <person name="Mitchell A.P."/>
        </authorList>
    </citation>
    <scope>FUNCTION</scope>
    <scope>DISRUPTION PHENOTYPE</scope>
</reference>
<reference key="25">
    <citation type="journal article" date="2006" name="FEMS Yeast Res.">
        <title>An in vitro assay to study the transcriptional response during adherence of Candida albicans to different human epithelia.</title>
        <authorList>
            <person name="Sohn K."/>
            <person name="Senyurek I."/>
            <person name="Fertey J."/>
            <person name="Konigsdorfer A."/>
            <person name="Joffroy C."/>
            <person name="Hauser N."/>
            <person name="Zelt G."/>
            <person name="Brunner H."/>
            <person name="Rupp S."/>
        </authorList>
    </citation>
    <scope>INDUCTION</scope>
</reference>
<reference key="26">
    <citation type="journal article" date="2006" name="J. Med. Microbiol.">
        <title>Candida albicans HWP1 gene expression and host antibody responses in colonization and disease.</title>
        <authorList>
            <person name="Naglik J.R."/>
            <person name="Fostira F."/>
            <person name="Ruprai J."/>
            <person name="Staab J.F."/>
            <person name="Challacombe S.J."/>
            <person name="Sundstrom P."/>
        </authorList>
    </citation>
    <scope>FUNCTION</scope>
    <scope>INDUCTION</scope>
</reference>
<reference key="27">
    <citation type="journal article" date="2006" name="Microb. Pathog.">
        <title>Expression of firefly luciferase in Candida albicans and its use in the selection of stable transformants.</title>
        <authorList>
            <person name="Doyle T.C."/>
            <person name="Nawotka K.A."/>
            <person name="Purchio A.F."/>
            <person name="Akin A.R."/>
            <person name="Francis K.P."/>
            <person name="Contag P.R."/>
        </authorList>
    </citation>
    <scope>INDUCTION</scope>
</reference>
<reference key="28">
    <citation type="journal article" date="2006" name="Mol. Biol. Cell">
        <title>The Flo8 transcription factor is essential for hyphal development and virulence in Candida albicans.</title>
        <authorList>
            <person name="Cao F."/>
            <person name="Lane S."/>
            <person name="Raniga P.P."/>
            <person name="Lu Y."/>
            <person name="Zhou Z."/>
            <person name="Ramon K."/>
            <person name="Chen J."/>
            <person name="Liu H."/>
        </authorList>
    </citation>
    <scope>INDUCTION</scope>
</reference>
<reference key="29">
    <citation type="journal article" date="2006" name="PLoS Pathog.">
        <title>Critical role of Bcr1-dependent adhesins in C. albicans biofilm formation in vitro and in vivo.</title>
        <authorList>
            <person name="Nobile C.J."/>
            <person name="Andes D.R."/>
            <person name="Nett J.E."/>
            <person name="Smith F.J."/>
            <person name="Yue F."/>
            <person name="Phan Q.T."/>
            <person name="Edwards J.E."/>
            <person name="Filler S.G."/>
            <person name="Mitchell A.P."/>
        </authorList>
    </citation>
    <scope>FUNCTION</scope>
</reference>
<reference key="30">
    <citation type="journal article" date="2007" name="BMC Microbiol.">
        <title>Diagnosis of invasive candidiasis by enzyme-linked immunosorbent assay using the N-terminal fragment of Candida albicans hyphal wall protein 1.</title>
        <authorList>
            <person name="Lain A."/>
            <person name="Elguezabal N."/>
            <person name="Brena S."/>
            <person name="Garcia-Ruiz J.C."/>
            <person name="Del Palacio A."/>
            <person name="Moragues M.D."/>
            <person name="Ponton J."/>
        </authorList>
    </citation>
    <scope>DIAGNOSTIC TOOL</scope>
</reference>
<reference key="31">
    <citation type="journal article" date="2007" name="Eukaryot. Cell">
        <title>A 368-base-pair cis-acting HWP1 promoter region, HCR, of Candida albicans confers hypha-specific gene regulation and binds architectural transcription factors Nhp6 and Gcf1p.</title>
        <authorList>
            <person name="Kim S."/>
            <person name="Wolyniak M.J."/>
            <person name="Staab J.F."/>
            <person name="Sundstrom P."/>
        </authorList>
    </citation>
    <scope>INDUCTION</scope>
</reference>
<reference key="32">
    <citation type="journal article" date="2007" name="J. Oral Pathol. Med.">
        <title>State of differentiation defines buccal epithelial cell affinity for cross-linking to Candida albicans Hwp1.</title>
        <authorList>
            <person name="Ponniah G."/>
            <person name="Rollenhagen C."/>
            <person name="Bahn Y.S."/>
            <person name="Staab J.F."/>
            <person name="Sundstrom P."/>
        </authorList>
    </citation>
    <scope>FUNCTION</scope>
    <scope>SUBSTRATE FOR HOST TRANSGLUTAMINASES</scope>
</reference>
<reference key="33">
    <citation type="journal article" date="2007" name="Med. Mycol.">
        <title>Hemoglobin is an effective inducer of hyphal differentiation in Candida albicans.</title>
        <authorList>
            <person name="Pendrak M.L."/>
            <person name="Roberts D.D."/>
        </authorList>
    </citation>
    <scope>INDUCTION</scope>
</reference>
<reference key="34">
    <citation type="journal article" date="2007" name="Mycopathologia">
        <title>Inhibition on Candida albicans biofilm formation using divalent cation chelators (EDTA).</title>
        <authorList>
            <person name="Ramage G."/>
            <person name="Wickes B.L."/>
            <person name="Lopez-Ribot J.L."/>
        </authorList>
    </citation>
    <scope>INDUCTION</scope>
</reference>
<reference key="35">
    <citation type="journal article" date="2008" name="Eukaryot. Cell">
        <title>Candida albicans Tup1 is involved in farnesol-mediated inhibition of filamentous-growth induction.</title>
        <authorList>
            <person name="Kebaara B.W."/>
            <person name="Langford M.L."/>
            <person name="Navarathna D.H."/>
            <person name="Dumitru R."/>
            <person name="Nickerson K.W."/>
            <person name="Atkin A.L."/>
        </authorList>
    </citation>
    <scope>INDUCTION</scope>
</reference>
<reference key="36">
    <citation type="journal article" date="2008" name="Eukaryot. Cell">
        <title>C-terminal signals regulate targeting of glycosylphosphatidylinositol-anchored proteins to the cell wall or plasma membrane in Candida albicans.</title>
        <authorList>
            <person name="Mao Y."/>
            <person name="Zhang Z."/>
            <person name="Gast C."/>
            <person name="Wong B."/>
        </authorList>
    </citation>
    <scope>SUBCELLULAR LOCATION</scope>
    <scope>GPI-ANCHOR</scope>
</reference>
<reference key="37">
    <citation type="journal article" date="2008" name="Folia Microbiol. (Praha)">
        <title>Expression of ALS1, HWP1 and SAP4 genes in Candida albicans strains isolated from women with vaginitis.</title>
        <authorList>
            <person name="Nas T."/>
            <person name="Kalkanci A."/>
            <person name="Fidan I."/>
            <person name="Hizel K."/>
            <person name="Bolat S."/>
            <person name="Yolbakan S."/>
            <person name="Yilmaz E."/>
            <person name="Ozkan S."/>
            <person name="Kustimur S."/>
        </authorList>
    </citation>
    <scope>FUNCTION</scope>
    <scope>INDUCTION</scope>
</reference>
<reference key="38">
    <citation type="journal article" date="2008" name="Fungal Genet. Biol.">
        <title>Functional analysis of Candida albicans GPI-anchored proteins: roles in cell wall integrity and caspofungin sensitivity.</title>
        <authorList>
            <person name="Plaine A."/>
            <person name="Walker L."/>
            <person name="Da Costa G."/>
            <person name="Mora-Montes H.M."/>
            <person name="McKinnon A."/>
            <person name="Gow N.A."/>
            <person name="Gaillardin C."/>
            <person name="Munro C.A."/>
            <person name="Richard M.L."/>
        </authorList>
    </citation>
    <scope>FUNCTION</scope>
</reference>
<reference key="39">
    <citation type="journal article" date="2008" name="Infect. Immun.">
        <title>Beta-1,2 oligomannose adhesin epitopes are widely distributed over the different families of Candida albicans cell wall mannoproteins and are associated through both N- and O-glycosylation processes.</title>
        <authorList>
            <person name="Fradin C."/>
            <person name="Slomianny M.C."/>
            <person name="Mille C."/>
            <person name="Masset A."/>
            <person name="Robert R."/>
            <person name="Sendid B."/>
            <person name="Ernst J.F."/>
            <person name="Michalski J.C."/>
            <person name="Poulain D."/>
        </authorList>
    </citation>
    <scope>GLYCOSYLATION</scope>
</reference>
<reference key="40">
    <citation type="journal article" date="2008" name="Microbiology">
        <title>Hypoxic conditions and iron restriction affect the cell-wall proteome of Candida albicans grown under vagina-simulative conditions.</title>
        <authorList>
            <person name="Sosinska G.J."/>
            <person name="de Groot P.W."/>
            <person name="Teixeira de Mattos M.J."/>
            <person name="Dekker H.L."/>
            <person name="de Koster C.G."/>
            <person name="Hellingwerf K.J."/>
            <person name="Klis F.M."/>
        </authorList>
    </citation>
    <scope>SUBCELLULAR LOCATION</scope>
    <scope>INDUCTION</scope>
</reference>
<reference key="41">
    <citation type="journal article" date="2008" name="Proc. Natl. Acad. Sci. U.S.A.">
        <title>Synthetic glycopeptide vaccines combining beta-mannan and peptide epitopes induce protection against candidiasis.</title>
        <authorList>
            <person name="Xin H."/>
            <person name="Dziadek S."/>
            <person name="Bundle D.R."/>
            <person name="Cutler J.E."/>
        </authorList>
    </citation>
    <scope>PRODUCTION OF VACCINES</scope>
</reference>
<reference key="42">
    <citation type="journal article" date="2009" name="Biol. Pharm. Bull.">
        <title>The inhibitory effect of a macrocyclic bisbibenzyl riccardin D on the biofilms of Candida albicans.</title>
        <authorList>
            <person name="Cheng A."/>
            <person name="Sun L."/>
            <person name="Wu X."/>
            <person name="Lou H."/>
        </authorList>
    </citation>
    <scope>INDUCTION</scope>
</reference>
<reference key="43">
    <citation type="journal article" date="2009" name="Eukaryot. Cell">
        <title>Mss11, a transcriptional activator, is required for hyphal development in Candida albicans.</title>
        <authorList>
            <person name="Su C."/>
            <person name="Li Y."/>
            <person name="Lu Y."/>
            <person name="Chen J."/>
        </authorList>
    </citation>
    <scope>INDUCTION</scope>
</reference>
<reference key="44">
    <citation type="journal article" date="2009" name="Eukaryot. Cell">
        <title>Hwp1 and related adhesins contribute to both mating and biofilm formation in Candida albicans.</title>
        <authorList>
            <person name="Ene I.V."/>
            <person name="Bennett R.J."/>
        </authorList>
    </citation>
    <scope>FUNCTION</scope>
    <scope>DISRUPTION PHENOTYPE</scope>
</reference>
<reference key="45">
    <citation type="journal article" date="2009" name="Fungal Genet. Biol.">
        <title>Trifluoromethanesulfonic acid-based proteomic analysis of cell wall and secreted proteins of the ascomycetous fungi Neurospora crassa and Candida albicans.</title>
        <authorList>
            <person name="Maddi A."/>
            <person name="Bowman S.M."/>
            <person name="Free S.J."/>
        </authorList>
    </citation>
    <scope>IDENTIFICATION BY MASS SPECTROMETRY</scope>
    <scope>SUBCELLULAR LOCATION</scope>
    <scope>INDUCTION</scope>
</reference>
<reference key="46">
    <citation type="journal article" date="2010" name="Antimicrob. Agents Chemother.">
        <title>Interaction of Candida albicans biofilms with antifungals: transcriptional response and binding of antifungals to beta-glucans.</title>
        <authorList>
            <person name="Vediyappan G."/>
            <person name="Rossignol T."/>
            <person name="d'Enfert C."/>
        </authorList>
    </citation>
    <scope>INDUCTION</scope>
</reference>
<reference key="47">
    <citation type="journal article" date="2010" name="Eukaryot. Cell">
        <title>Heterologous expression of Candida albicans cell wall-associated adhesins in Saccharomyces cerevisiae Reveals differential specificities in adherence and biofilm formation and in binding oral Streptococcus gordonii.</title>
        <authorList>
            <person name="Nobbs A.H."/>
            <person name="Vickerman M.M."/>
            <person name="Jenkinson H.F."/>
        </authorList>
    </citation>
    <scope>FUNCTION</scope>
</reference>
<reference key="48">
    <citation type="journal article" date="2010" name="ChemBioChem">
        <title>Streptococcus mutans inhibits Candida albicans hyphal formation by the fatty acid signaling molecule trans-2-decenoic acid (SDSF).</title>
        <authorList>
            <person name="Vilchez R."/>
            <person name="Lemme A."/>
            <person name="Ballhausen B."/>
            <person name="Thiel V."/>
            <person name="Schulz S."/>
            <person name="Jansen R."/>
            <person name="Sztajer H."/>
            <person name="Wagner-Dobler I."/>
        </authorList>
    </citation>
    <scope>INDUCTION</scope>
</reference>
<reference key="49">
    <citation type="journal article" date="2010" name="PLoS ONE">
        <title>Capric acid secreted by S. boulardii inhibits C. albicans filamentous growth, adhesion and biofilm formation.</title>
        <authorList>
            <person name="Murzyn A."/>
            <person name="Krasowska A."/>
            <person name="Stefanowicz P."/>
            <person name="Dziadkowiec D."/>
            <person name="Lukaszewicz M."/>
        </authorList>
    </citation>
    <scope>INDUCTION</scope>
</reference>
<reference key="50">
    <citation type="journal article" date="2011" name="Microbiology">
        <title>Mass spectrometric quantification of the adaptations in the wall proteome of Candida albicans in response to ambient pH.</title>
        <authorList>
            <person name="Sosinska G.J."/>
            <person name="de Koning L.J."/>
            <person name="de Groot P.W."/>
            <person name="Manders E.M."/>
            <person name="Dekker H.L."/>
            <person name="Hellingwerf K.J."/>
            <person name="de Koster C.G."/>
            <person name="Klis F.M."/>
        </authorList>
    </citation>
    <scope>SUBCELLULAR LOCATION</scope>
    <scope>INDUCTION</scope>
</reference>
<reference key="51">
    <citation type="journal article" date="2011" name="Phytomedicine">
        <title>Comparison between allicin and fluconazole in Candida albicans biofilm inhibition and in suppression of HWP1 gene expression.</title>
        <authorList>
            <person name="Khodavandi A."/>
            <person name="Harmal N.S."/>
            <person name="Alizadeh F."/>
            <person name="Scully O.J."/>
            <person name="Sidik S.M."/>
            <person name="Othman F."/>
            <person name="Sekawi Z."/>
            <person name="Ng K.P."/>
            <person name="Chong P.P."/>
        </authorList>
    </citation>
    <scope>INDUCTION</scope>
</reference>
<reference key="52">
    <citation type="journal article" date="2011" name="PLoS ONE">
        <title>Role of Bcr1-activated genes Hwp1 and Hyr1 in Candida albicans oral mucosal biofilms and neutrophil evasion.</title>
        <authorList>
            <person name="Dwivedi P."/>
            <person name="Thompson A."/>
            <person name="Xie Z."/>
            <person name="Kashleva H."/>
            <person name="Ganguly S."/>
            <person name="Mitchell A.P."/>
            <person name="Dongari-Bagtzoglou A."/>
        </authorList>
    </citation>
    <scope>FUNCTION</scope>
</reference>
<reference key="53">
    <citation type="journal article" date="2012" name="PLoS ONE">
        <title>Purpurin suppresses Candida albicans biofilm formation and hyphal development.</title>
        <authorList>
            <person name="Tsang P.W."/>
            <person name="Bandara H.M."/>
            <person name="Fong W.P."/>
        </authorList>
    </citation>
    <scope>INDUCTION</scope>
</reference>
<reference key="54">
    <citation type="journal article" date="2013" name="Appl. Microbiol. Biotechnol.">
        <title>Inhibition of yeast-to-hypha transition in Candida albicans by phorbasin H isolated from Phorbas sp.</title>
        <authorList>
            <person name="Lee S.H."/>
            <person name="Jeon J.E."/>
            <person name="Ahn C.H."/>
            <person name="Chung S.C."/>
            <person name="Shin J."/>
            <person name="Oh K.B."/>
        </authorList>
    </citation>
    <scope>INDUCTION</scope>
</reference>
<reference key="55">
    <citation type="journal article" date="2013" name="J. Biotechnol.">
        <title>Identification of inhibitors of yeast-to-hyphae transition in Candida albicans by a reporter screening assay.</title>
        <authorList>
            <person name="Heintz-Buschart A."/>
            <person name="Eickhoff H."/>
            <person name="Hohn E."/>
            <person name="Bilitewski U."/>
        </authorList>
    </citation>
    <scope>INDUCTION</scope>
</reference>
<reference key="56">
    <citation type="journal article" date="2013" name="Med. Mycol.">
        <title>The inhibitory activity of linalool against the filamentous growth and biofilm formation in Candida albicans.</title>
        <authorList>
            <person name="Hsu C.C."/>
            <person name="Lai W.L."/>
            <person name="Chuang K.C."/>
            <person name="Lee M.H."/>
            <person name="Tsai Y.C."/>
        </authorList>
    </citation>
    <scope>INDUCTION</scope>
</reference>
<reference key="57">
    <citation type="journal article" date="2014" name="Phytomedicine">
        <title>Ocimum sanctum essential oil inhibits virulence attributes in Candida albicans.</title>
        <authorList>
            <person name="Khan A."/>
            <person name="Ahmad A."/>
            <person name="Xess I."/>
            <person name="Khan L.A."/>
            <person name="Manzoor N."/>
        </authorList>
    </citation>
    <scope>INDUCTION</scope>
</reference>
<reference key="58">
    <citation type="journal article" date="2013" name="PLoS ONE">
        <title>Human serum promotes Candida albicans biofilm growth and virulence gene expression on silicone biomaterial.</title>
        <authorList>
            <person name="Samaranayake Y.H."/>
            <person name="Cheung B.P."/>
            <person name="Yau J.Y."/>
            <person name="Yeung S.K."/>
            <person name="Samaranayake L.P."/>
        </authorList>
    </citation>
    <scope>INDUCTION</scope>
</reference>
<reference key="59">
    <citation type="journal article" date="2013" name="PLoS ONE">
        <title>Niche-specific requirement for hyphal wall protein 1 in virulence of Candida albicans.</title>
        <authorList>
            <person name="Staab J.F."/>
            <person name="Datta K."/>
            <person name="Rhee P."/>
        </authorList>
    </citation>
    <scope>FUNCTION</scope>
    <scope>DISRUPTION PHENOTYPE</scope>
</reference>
<reference key="60">
    <citation type="journal article" date="2013" name="Proc. Natl. Acad. Sci. U.S.A.">
        <title>Chemical screening identifies filastatin, a small molecule inhibitor of Candida albicans adhesion, morphogenesis, and pathogenesis.</title>
        <authorList>
            <person name="Fazly A."/>
            <person name="Jain C."/>
            <person name="Dehner A.C."/>
            <person name="Issi L."/>
            <person name="Lilly E.A."/>
            <person name="Ali A."/>
            <person name="Cao H."/>
            <person name="Fidel P.L. Jr."/>
            <person name="Rao R.P."/>
            <person name="Kaufman P.D."/>
        </authorList>
    </citation>
    <scope>INDUCTION</scope>
</reference>
<proteinExistence type="evidence at protein level"/>
<accession>P46593</accession>
<accession>A0A1D8PLV3</accession>
<accession>O13424</accession>
<accession>P87019</accession>
<accession>Q59TL7</accession>
<keyword id="KW-0130">Cell adhesion</keyword>
<keyword id="KW-0134">Cell wall</keyword>
<keyword id="KW-0325">Glycoprotein</keyword>
<keyword id="KW-0336">GPI-anchor</keyword>
<keyword id="KW-0449">Lipoprotein</keyword>
<keyword id="KW-0472">Membrane</keyword>
<keyword id="KW-1185">Reference proteome</keyword>
<keyword id="KW-0677">Repeat</keyword>
<keyword id="KW-0964">Secreted</keyword>
<keyword id="KW-0732">Signal</keyword>
<keyword id="KW-0843">Virulence</keyword>
<comment type="function">
    <text evidence="3 4 5 11 12 15 20 21 22 26 31 32 36 40 42 51">Major hyphal cell wall protein which plays a role of adhesin and is required for mating, normal hyphal development, cell-to-cell adhesive functions necessary for biofilm integrity, attachment to host, and virulence. Promotes interactions with host and bacterial molecules, thus leading to effective colonization within polymicrobial communities. Plays a crucial role in gastrointestinal colonization, in mucosal symptomatic and asymptomatic infections, in vaginitis, as well as in lethal oroesophageal candidiasis, caused by the combined action of fungal virulence factors and host inflammatory responses when protective immunity is absent.</text>
</comment>
<comment type="subcellular location">
    <subcellularLocation>
        <location>Secreted</location>
        <location>Cell wall</location>
    </subcellularLocation>
    <subcellularLocation>
        <location>Membrane</location>
        <topology>Lipid-anchor</topology>
        <topology>GPI-anchor</topology>
    </subcellularLocation>
    <text>Hyphal surface. Localizes to the a/a Portion of the conjugation bridge during mating.</text>
</comment>
<comment type="developmental stage">
    <text>Found in hyphal but not yeast forms.</text>
</comment>
<comment type="induction">
    <text evidence="4 6 7 8 9 10 13 16 17 18 19 21 23 24 25 27 28 29 32 33 34 35 37 38 39 41 43 44 45 46 47 48 49 50 52">The promoter contains a 368 bp region, the HWP1 control region (HCR), which is target of transcription factors and is critical for activation under hypha-inducing conditions. Expression is positively regulated by BCR1, EFG1, FLO8, GPA2, GPR1, MSS11, RBF1, and RFG1; and negatively regulated by NRG1 and TUP1. Transcription is induced in an adhesion-dependent manner and in presence of human serum or hemoglobin. Expression is down-regulated by hypoxic conditions, allicine, ethylenediaminetetra-acetic acid (EDTA), farnesol, linalool, riccardin D, purpurin, filastatin, phorbasin H, Ocimum sanctum essential oil (OSEO), as well as many substances belonging to chemical classes such as methyl aryl-oxazoline carboxylates, dihydrobenzo-d-isoxazolones, and thiazolo-4,5-e-benzoisoxazoles. Moreover, the competitors Saccharomyces boulardii or Streptococcus mutans secrete respectively capric acid and trans-2-decenoic acid (SDSF) which also suppress HWP1 expression.</text>
</comment>
<comment type="PTM">
    <text>The GPI-anchor is attached to the protein in the endoplasmic reticulum and serves to target the protein to the cell surface. There, the glucosamine-inositol phospholipid moiety is cleaved off and the GPI-modified mannoprotein is covalently attached via its lipidless GPI glycan remnant to the 1,6-beta-glucan of the outer cell wall layer.</text>
</comment>
<comment type="PTM">
    <text>Serves as a substrate for mammalian transglutaminases which are necessary for cross-linking between HWP1 and host epithelial cells. Also predicted to be a substrate for cleavage by KEX2.</text>
</comment>
<comment type="PTM">
    <text evidence="15 30">N- and O-glycosylated.</text>
</comment>
<comment type="disruption phenotype">
    <text evidence="3 5 11 22 36 51">Reduces the overall mating frequency in both liquid and solid media. Impairs stable attachments to human buccal epithelial cells and reduces capacity to cause systemic candidiasis in mice. Produces a thin biofilm that lacks much of the hyphal mass found in the wild type cell.</text>
</comment>
<comment type="miscellaneous">
    <text>As a major cell surface protein expressed during infection, HWP1 detection can be used for diagnosis of invasive candidiasis. HWP1 epitopes can also be used to develop vaccines for protection against candidiasis.</text>
</comment>
<comment type="similarity">
    <text evidence="53">Belongs to the HWP1 family.</text>
</comment>
<evidence type="ECO:0000255" key="1"/>
<evidence type="ECO:0000256" key="2">
    <source>
        <dbReference type="SAM" id="MobiDB-lite"/>
    </source>
</evidence>
<evidence type="ECO:0000269" key="3">
    <source>
    </source>
</evidence>
<evidence type="ECO:0000269" key="4">
    <source>
    </source>
</evidence>
<evidence type="ECO:0000269" key="5">
    <source>
    </source>
</evidence>
<evidence type="ECO:0000269" key="6">
    <source>
    </source>
</evidence>
<evidence type="ECO:0000269" key="7">
    <source>
    </source>
</evidence>
<evidence type="ECO:0000269" key="8">
    <source>
    </source>
</evidence>
<evidence type="ECO:0000269" key="9">
    <source>
    </source>
</evidence>
<evidence type="ECO:0000269" key="10">
    <source>
    </source>
</evidence>
<evidence type="ECO:0000269" key="11">
    <source>
    </source>
</evidence>
<evidence type="ECO:0000269" key="12">
    <source>
    </source>
</evidence>
<evidence type="ECO:0000269" key="13">
    <source>
    </source>
</evidence>
<evidence type="ECO:0000269" key="14">
    <source>
    </source>
</evidence>
<evidence type="ECO:0000269" key="15">
    <source>
    </source>
</evidence>
<evidence type="ECO:0000269" key="16">
    <source>
    </source>
</evidence>
<evidence type="ECO:0000269" key="17">
    <source>
    </source>
</evidence>
<evidence type="ECO:0000269" key="18">
    <source>
    </source>
</evidence>
<evidence type="ECO:0000269" key="19">
    <source>
    </source>
</evidence>
<evidence type="ECO:0000269" key="20">
    <source>
    </source>
</evidence>
<evidence type="ECO:0000269" key="21">
    <source>
    </source>
</evidence>
<evidence type="ECO:0000269" key="22">
    <source>
    </source>
</evidence>
<evidence type="ECO:0000269" key="23">
    <source>
    </source>
</evidence>
<evidence type="ECO:0000269" key="24">
    <source>
    </source>
</evidence>
<evidence type="ECO:0000269" key="25">
    <source>
    </source>
</evidence>
<evidence type="ECO:0000269" key="26">
    <source>
    </source>
</evidence>
<evidence type="ECO:0000269" key="27">
    <source>
    </source>
</evidence>
<evidence type="ECO:0000269" key="28">
    <source>
    </source>
</evidence>
<evidence type="ECO:0000269" key="29">
    <source>
    </source>
</evidence>
<evidence type="ECO:0000269" key="30">
    <source>
    </source>
</evidence>
<evidence type="ECO:0000269" key="31">
    <source>
    </source>
</evidence>
<evidence type="ECO:0000269" key="32">
    <source>
    </source>
</evidence>
<evidence type="ECO:0000269" key="33">
    <source>
    </source>
</evidence>
<evidence type="ECO:0000269" key="34">
    <source>
    </source>
</evidence>
<evidence type="ECO:0000269" key="35">
    <source>
    </source>
</evidence>
<evidence type="ECO:0000269" key="36">
    <source>
    </source>
</evidence>
<evidence type="ECO:0000269" key="37">
    <source>
    </source>
</evidence>
<evidence type="ECO:0000269" key="38">
    <source>
    </source>
</evidence>
<evidence type="ECO:0000269" key="39">
    <source>
    </source>
</evidence>
<evidence type="ECO:0000269" key="40">
    <source>
    </source>
</evidence>
<evidence type="ECO:0000269" key="41">
    <source>
    </source>
</evidence>
<evidence type="ECO:0000269" key="42">
    <source>
    </source>
</evidence>
<evidence type="ECO:0000269" key="43">
    <source>
    </source>
</evidence>
<evidence type="ECO:0000269" key="44">
    <source>
    </source>
</evidence>
<evidence type="ECO:0000269" key="45">
    <source>
    </source>
</evidence>
<evidence type="ECO:0000269" key="46">
    <source>
    </source>
</evidence>
<evidence type="ECO:0000269" key="47">
    <source>
    </source>
</evidence>
<evidence type="ECO:0000269" key="48">
    <source>
    </source>
</evidence>
<evidence type="ECO:0000269" key="49">
    <source>
    </source>
</evidence>
<evidence type="ECO:0000269" key="50">
    <source>
    </source>
</evidence>
<evidence type="ECO:0000269" key="51">
    <source>
    </source>
</evidence>
<evidence type="ECO:0000269" key="52">
    <source>
    </source>
</evidence>
<evidence type="ECO:0000305" key="53"/>